<proteinExistence type="inferred from homology"/>
<gene>
    <name evidence="1" type="primary">hisC</name>
    <name type="ordered locus">CGSHiEE_00640</name>
</gene>
<keyword id="KW-0028">Amino-acid biosynthesis</keyword>
<keyword id="KW-0032">Aminotransferase</keyword>
<keyword id="KW-0368">Histidine biosynthesis</keyword>
<keyword id="KW-0663">Pyridoxal phosphate</keyword>
<keyword id="KW-0808">Transferase</keyword>
<evidence type="ECO:0000255" key="1">
    <source>
        <dbReference type="HAMAP-Rule" id="MF_01023"/>
    </source>
</evidence>
<dbReference type="EC" id="2.6.1.9" evidence="1"/>
<dbReference type="EMBL" id="CP000671">
    <property type="protein sequence ID" value="ABQ97620.1"/>
    <property type="molecule type" value="Genomic_DNA"/>
</dbReference>
<dbReference type="SMR" id="A5UA19"/>
<dbReference type="KEGG" id="hip:CGSHiEE_00640"/>
<dbReference type="HOGENOM" id="CLU_017584_3_1_6"/>
<dbReference type="UniPathway" id="UPA00031">
    <property type="reaction ID" value="UER00012"/>
</dbReference>
<dbReference type="GO" id="GO:0004400">
    <property type="term" value="F:histidinol-phosphate transaminase activity"/>
    <property type="evidence" value="ECO:0007669"/>
    <property type="project" value="UniProtKB-UniRule"/>
</dbReference>
<dbReference type="GO" id="GO:0030170">
    <property type="term" value="F:pyridoxal phosphate binding"/>
    <property type="evidence" value="ECO:0007669"/>
    <property type="project" value="InterPro"/>
</dbReference>
<dbReference type="GO" id="GO:0000105">
    <property type="term" value="P:L-histidine biosynthetic process"/>
    <property type="evidence" value="ECO:0007669"/>
    <property type="project" value="UniProtKB-UniRule"/>
</dbReference>
<dbReference type="CDD" id="cd00609">
    <property type="entry name" value="AAT_like"/>
    <property type="match status" value="1"/>
</dbReference>
<dbReference type="Gene3D" id="3.90.1150.10">
    <property type="entry name" value="Aspartate Aminotransferase, domain 1"/>
    <property type="match status" value="1"/>
</dbReference>
<dbReference type="Gene3D" id="3.40.640.10">
    <property type="entry name" value="Type I PLP-dependent aspartate aminotransferase-like (Major domain)"/>
    <property type="match status" value="1"/>
</dbReference>
<dbReference type="HAMAP" id="MF_01023">
    <property type="entry name" value="HisC_aminotrans_2"/>
    <property type="match status" value="1"/>
</dbReference>
<dbReference type="InterPro" id="IPR001917">
    <property type="entry name" value="Aminotrans_II_pyridoxalP_BS"/>
</dbReference>
<dbReference type="InterPro" id="IPR004839">
    <property type="entry name" value="Aminotransferase_I/II_large"/>
</dbReference>
<dbReference type="InterPro" id="IPR005861">
    <property type="entry name" value="HisP_aminotrans"/>
</dbReference>
<dbReference type="InterPro" id="IPR015424">
    <property type="entry name" value="PyrdxlP-dep_Trfase"/>
</dbReference>
<dbReference type="InterPro" id="IPR015421">
    <property type="entry name" value="PyrdxlP-dep_Trfase_major"/>
</dbReference>
<dbReference type="InterPro" id="IPR015422">
    <property type="entry name" value="PyrdxlP-dep_Trfase_small"/>
</dbReference>
<dbReference type="NCBIfam" id="TIGR01141">
    <property type="entry name" value="hisC"/>
    <property type="match status" value="1"/>
</dbReference>
<dbReference type="PANTHER" id="PTHR42885:SF2">
    <property type="entry name" value="HISTIDINOL-PHOSPHATE AMINOTRANSFERASE"/>
    <property type="match status" value="1"/>
</dbReference>
<dbReference type="PANTHER" id="PTHR42885">
    <property type="entry name" value="HISTIDINOL-PHOSPHATE AMINOTRANSFERASE-RELATED"/>
    <property type="match status" value="1"/>
</dbReference>
<dbReference type="Pfam" id="PF00155">
    <property type="entry name" value="Aminotran_1_2"/>
    <property type="match status" value="1"/>
</dbReference>
<dbReference type="SUPFAM" id="SSF53383">
    <property type="entry name" value="PLP-dependent transferases"/>
    <property type="match status" value="1"/>
</dbReference>
<dbReference type="PROSITE" id="PS00599">
    <property type="entry name" value="AA_TRANSFER_CLASS_2"/>
    <property type="match status" value="1"/>
</dbReference>
<sequence length="352" mass="38904">MTITTLSRQNIQALTPYQSARKLGGNGTIWLNANEYPTSPKFQLSGKDLNRYPEPQPQRVVQAYANYAGVSTENVLVTRGGDEGIELIIHTFCEPKQDAILFCPPTYGMYAVSAETAGVLSKTVPLTDDFQLNLPEIKNHLNDVKVVFVCSPNNPTGNLLKQSDILDLLQITAGKAIVVVDEAYIEFCPEASVINLLKNYPHLAIIRTLSKAFALAGLRCGFVLANPELIDILSKVIAPYPIPVPSADLAEQALRPANIATVQALTQELLSNRQWLAKALLVLHQVEKVYESEANYLLIKCQNGQAVFKALWEQGIILRDQNKTLHLQNCIRITVGTRNECEKVVEAIKEVK</sequence>
<accession>A5UA19</accession>
<comment type="catalytic activity">
    <reaction evidence="1">
        <text>L-histidinol phosphate + 2-oxoglutarate = 3-(imidazol-4-yl)-2-oxopropyl phosphate + L-glutamate</text>
        <dbReference type="Rhea" id="RHEA:23744"/>
        <dbReference type="ChEBI" id="CHEBI:16810"/>
        <dbReference type="ChEBI" id="CHEBI:29985"/>
        <dbReference type="ChEBI" id="CHEBI:57766"/>
        <dbReference type="ChEBI" id="CHEBI:57980"/>
        <dbReference type="EC" id="2.6.1.9"/>
    </reaction>
</comment>
<comment type="cofactor">
    <cofactor evidence="1">
        <name>pyridoxal 5'-phosphate</name>
        <dbReference type="ChEBI" id="CHEBI:597326"/>
    </cofactor>
</comment>
<comment type="pathway">
    <text evidence="1">Amino-acid biosynthesis; L-histidine biosynthesis; L-histidine from 5-phospho-alpha-D-ribose 1-diphosphate: step 7/9.</text>
</comment>
<comment type="subunit">
    <text evidence="1">Homodimer.</text>
</comment>
<comment type="similarity">
    <text evidence="1">Belongs to the class-II pyridoxal-phosphate-dependent aminotransferase family. Histidinol-phosphate aminotransferase subfamily.</text>
</comment>
<organism>
    <name type="scientific">Haemophilus influenzae (strain PittEE)</name>
    <dbReference type="NCBI Taxonomy" id="374930"/>
    <lineage>
        <taxon>Bacteria</taxon>
        <taxon>Pseudomonadati</taxon>
        <taxon>Pseudomonadota</taxon>
        <taxon>Gammaproteobacteria</taxon>
        <taxon>Pasteurellales</taxon>
        <taxon>Pasteurellaceae</taxon>
        <taxon>Haemophilus</taxon>
    </lineage>
</organism>
<feature type="chain" id="PRO_1000063479" description="Histidinol-phosphate aminotransferase">
    <location>
        <begin position="1"/>
        <end position="352"/>
    </location>
</feature>
<feature type="modified residue" description="N6-(pyridoxal phosphate)lysine" evidence="1">
    <location>
        <position position="211"/>
    </location>
</feature>
<name>HIS8_HAEIE</name>
<protein>
    <recommendedName>
        <fullName evidence="1">Histidinol-phosphate aminotransferase</fullName>
        <ecNumber evidence="1">2.6.1.9</ecNumber>
    </recommendedName>
    <alternativeName>
        <fullName evidence="1">Imidazole acetol-phosphate transaminase</fullName>
    </alternativeName>
</protein>
<reference key="1">
    <citation type="journal article" date="2007" name="Genome Biol.">
        <title>Characterization and modeling of the Haemophilus influenzae core and supragenomes based on the complete genomic sequences of Rd and 12 clinical nontypeable strains.</title>
        <authorList>
            <person name="Hogg J.S."/>
            <person name="Hu F.Z."/>
            <person name="Janto B."/>
            <person name="Boissy R."/>
            <person name="Hayes J."/>
            <person name="Keefe R."/>
            <person name="Post J.C."/>
            <person name="Ehrlich G.D."/>
        </authorList>
    </citation>
    <scope>NUCLEOTIDE SEQUENCE [LARGE SCALE GENOMIC DNA]</scope>
    <source>
        <strain>PittEE</strain>
    </source>
</reference>